<organism>
    <name type="scientific">Schizosaccharomyces pombe (strain 972 / ATCC 24843)</name>
    <name type="common">Fission yeast</name>
    <dbReference type="NCBI Taxonomy" id="284812"/>
    <lineage>
        <taxon>Eukaryota</taxon>
        <taxon>Fungi</taxon>
        <taxon>Dikarya</taxon>
        <taxon>Ascomycota</taxon>
        <taxon>Taphrinomycotina</taxon>
        <taxon>Schizosaccharomycetes</taxon>
        <taxon>Schizosaccharomycetales</taxon>
        <taxon>Schizosaccharomycetaceae</taxon>
        <taxon>Schizosaccharomyces</taxon>
    </lineage>
</organism>
<dbReference type="EMBL" id="CU329671">
    <property type="protein sequence ID" value="CAB91175.1"/>
    <property type="molecule type" value="Genomic_DNA"/>
</dbReference>
<dbReference type="EMBL" id="AB027927">
    <property type="protein sequence ID" value="BAA87231.1"/>
    <property type="molecule type" value="Genomic_DNA"/>
</dbReference>
<dbReference type="SMR" id="Q9P6I9"/>
<dbReference type="BioGRID" id="276544">
    <property type="interactions" value="10"/>
</dbReference>
<dbReference type="FunCoup" id="Q9P6I9">
    <property type="interactions" value="1"/>
</dbReference>
<dbReference type="STRING" id="284812.Q9P6I9"/>
<dbReference type="iPTMnet" id="Q9P6I9"/>
<dbReference type="PaxDb" id="4896-SPBC1683.13c.1"/>
<dbReference type="EnsemblFungi" id="SPBC1683.13c.1">
    <property type="protein sequence ID" value="SPBC1683.13c.1:pep"/>
    <property type="gene ID" value="SPBC1683.13c"/>
</dbReference>
<dbReference type="KEGG" id="spo:2540000"/>
<dbReference type="PomBase" id="SPBC1683.13c"/>
<dbReference type="VEuPathDB" id="FungiDB:SPBC1683.13c"/>
<dbReference type="eggNOG" id="ENOG502QQZ4">
    <property type="taxonomic scope" value="Eukaryota"/>
</dbReference>
<dbReference type="HOGENOM" id="CLU_015811_2_0_1"/>
<dbReference type="InParanoid" id="Q9P6I9"/>
<dbReference type="OMA" id="DEIQNTW"/>
<dbReference type="PhylomeDB" id="Q9P6I9"/>
<dbReference type="PRO" id="PR:Q9P6I9"/>
<dbReference type="Proteomes" id="UP000002485">
    <property type="component" value="Chromosome II"/>
</dbReference>
<dbReference type="GO" id="GO:0005634">
    <property type="term" value="C:nucleus"/>
    <property type="evidence" value="ECO:0007005"/>
    <property type="project" value="PomBase"/>
</dbReference>
<dbReference type="GO" id="GO:0000981">
    <property type="term" value="F:DNA-binding transcription factor activity, RNA polymerase II-specific"/>
    <property type="evidence" value="ECO:0000255"/>
    <property type="project" value="PomBase"/>
</dbReference>
<dbReference type="GO" id="GO:0000978">
    <property type="term" value="F:RNA polymerase II cis-regulatory region sequence-specific DNA binding"/>
    <property type="evidence" value="ECO:0000255"/>
    <property type="project" value="PomBase"/>
</dbReference>
<dbReference type="GO" id="GO:0008270">
    <property type="term" value="F:zinc ion binding"/>
    <property type="evidence" value="ECO:0000255"/>
    <property type="project" value="PomBase"/>
</dbReference>
<dbReference type="GO" id="GO:0006351">
    <property type="term" value="P:DNA-templated transcription"/>
    <property type="evidence" value="ECO:0007669"/>
    <property type="project" value="InterPro"/>
</dbReference>
<dbReference type="GO" id="GO:0000122">
    <property type="term" value="P:negative regulation of transcription by RNA polymerase II"/>
    <property type="evidence" value="ECO:0000315"/>
    <property type="project" value="PomBase"/>
</dbReference>
<dbReference type="GO" id="GO:0006808">
    <property type="term" value="P:regulation of nitrogen utilization"/>
    <property type="evidence" value="ECO:0000315"/>
    <property type="project" value="PomBase"/>
</dbReference>
<dbReference type="CDD" id="cd12148">
    <property type="entry name" value="fungal_TF_MHR"/>
    <property type="match status" value="1"/>
</dbReference>
<dbReference type="CDD" id="cd00067">
    <property type="entry name" value="GAL4"/>
    <property type="match status" value="1"/>
</dbReference>
<dbReference type="FunFam" id="4.10.240.10:FF:000018">
    <property type="entry name" value="Casein kinase II subunit beta"/>
    <property type="match status" value="1"/>
</dbReference>
<dbReference type="Gene3D" id="4.10.240.10">
    <property type="entry name" value="Zn(2)-C6 fungal-type DNA-binding domain"/>
    <property type="match status" value="1"/>
</dbReference>
<dbReference type="InterPro" id="IPR051615">
    <property type="entry name" value="Transcr_Regulatory_Elem"/>
</dbReference>
<dbReference type="InterPro" id="IPR007219">
    <property type="entry name" value="Transcription_factor_dom_fun"/>
</dbReference>
<dbReference type="InterPro" id="IPR036864">
    <property type="entry name" value="Zn2-C6_fun-type_DNA-bd_sf"/>
</dbReference>
<dbReference type="InterPro" id="IPR001138">
    <property type="entry name" value="Zn2Cys6_DnaBD"/>
</dbReference>
<dbReference type="PANTHER" id="PTHR31313">
    <property type="entry name" value="TY1 ENHANCER ACTIVATOR"/>
    <property type="match status" value="1"/>
</dbReference>
<dbReference type="PANTHER" id="PTHR31313:SF81">
    <property type="entry name" value="TY1 ENHANCER ACTIVATOR"/>
    <property type="match status" value="1"/>
</dbReference>
<dbReference type="Pfam" id="PF04082">
    <property type="entry name" value="Fungal_trans"/>
    <property type="match status" value="1"/>
</dbReference>
<dbReference type="Pfam" id="PF00172">
    <property type="entry name" value="Zn_clus"/>
    <property type="match status" value="1"/>
</dbReference>
<dbReference type="SMART" id="SM00906">
    <property type="entry name" value="Fungal_trans"/>
    <property type="match status" value="1"/>
</dbReference>
<dbReference type="SMART" id="SM00066">
    <property type="entry name" value="GAL4"/>
    <property type="match status" value="1"/>
</dbReference>
<dbReference type="SUPFAM" id="SSF57701">
    <property type="entry name" value="Zn2/Cys6 DNA-binding domain"/>
    <property type="match status" value="1"/>
</dbReference>
<dbReference type="PROSITE" id="PS00463">
    <property type="entry name" value="ZN2_CY6_FUNGAL_1"/>
    <property type="match status" value="1"/>
</dbReference>
<dbReference type="PROSITE" id="PS50048">
    <property type="entry name" value="ZN2_CY6_FUNGAL_2"/>
    <property type="match status" value="1"/>
</dbReference>
<name>YHDD_SCHPO</name>
<keyword id="KW-0238">DNA-binding</keyword>
<keyword id="KW-0479">Metal-binding</keyword>
<keyword id="KW-0539">Nucleus</keyword>
<keyword id="KW-0597">Phosphoprotein</keyword>
<keyword id="KW-1185">Reference proteome</keyword>
<keyword id="KW-0804">Transcription</keyword>
<keyword id="KW-0805">Transcription regulation</keyword>
<keyword id="KW-0862">Zinc</keyword>
<proteinExistence type="evidence at protein level"/>
<accession>Q9P6I9</accession>
<accession>Q9UTY6</accession>
<sequence length="618" mass="72292">MQMKPRQDKKNQEIFRISCQRCRQRKIKCDRLHPCFQCVKSNSQCFYPEDPIRRRAPKEYVEALERQIAFFEAFVKKLAKVGSDEQSLMIQDMNNKIVNEGNEYDQTPDISARKRRKHFRMLPQNNFRYFQFYGTTNVISASNLTTTSEIPTFKFPIFSKRKYNDTENLYEQPFHLEFDTCQELLSLFFLKQYHNFMFVFRDYFIRDFELGGGPYYSQWLLFAICSIGAMISPDDDLKNLSNTLANIAEKWVLDEGLNSPDITTLQTLLVLGIREIGRGLTFKGWLFSGMAFRLVYDMGLHLDPDHWDHSEESRIDREVRRRCFWGCFTLDKLISLCYGRPPGLYLKQTDVRNTTQLPYISELDEPFEIFNKKSELFAAVSAGEDRRGLVQFWLNQVELCKIIHRMLTEVFEDRTSSVLEASINNIHTELQKWIADIPMELQWNTRSQKETSSTVLLLHMLYHSVIIILNRPSDDNYLKLDNTERYTFEICWKSAKTIVQLLKIYFKKYDADCLPMTFIHIATSAARIILVKLNENIPEDGDVCNIYLEIITNALDVCANVWPLASQASRAILNAYKSCATSPKENNEDSLPLQRSPSLDDVSRFDSLDYIFSPNVKY</sequence>
<comment type="subcellular location">
    <subcellularLocation>
        <location evidence="1 2">Nucleus</location>
    </subcellularLocation>
</comment>
<reference key="1">
    <citation type="journal article" date="2002" name="Nature">
        <title>The genome sequence of Schizosaccharomyces pombe.</title>
        <authorList>
            <person name="Wood V."/>
            <person name="Gwilliam R."/>
            <person name="Rajandream M.A."/>
            <person name="Lyne M.H."/>
            <person name="Lyne R."/>
            <person name="Stewart A."/>
            <person name="Sgouros J.G."/>
            <person name="Peat N."/>
            <person name="Hayles J."/>
            <person name="Baker S.G."/>
            <person name="Basham D."/>
            <person name="Bowman S."/>
            <person name="Brooks K."/>
            <person name="Brown D."/>
            <person name="Brown S."/>
            <person name="Chillingworth T."/>
            <person name="Churcher C.M."/>
            <person name="Collins M."/>
            <person name="Connor R."/>
            <person name="Cronin A."/>
            <person name="Davis P."/>
            <person name="Feltwell T."/>
            <person name="Fraser A."/>
            <person name="Gentles S."/>
            <person name="Goble A."/>
            <person name="Hamlin N."/>
            <person name="Harris D.E."/>
            <person name="Hidalgo J."/>
            <person name="Hodgson G."/>
            <person name="Holroyd S."/>
            <person name="Hornsby T."/>
            <person name="Howarth S."/>
            <person name="Huckle E.J."/>
            <person name="Hunt S."/>
            <person name="Jagels K."/>
            <person name="James K.D."/>
            <person name="Jones L."/>
            <person name="Jones M."/>
            <person name="Leather S."/>
            <person name="McDonald S."/>
            <person name="McLean J."/>
            <person name="Mooney P."/>
            <person name="Moule S."/>
            <person name="Mungall K.L."/>
            <person name="Murphy L.D."/>
            <person name="Niblett D."/>
            <person name="Odell C."/>
            <person name="Oliver K."/>
            <person name="O'Neil S."/>
            <person name="Pearson D."/>
            <person name="Quail M.A."/>
            <person name="Rabbinowitsch E."/>
            <person name="Rutherford K.M."/>
            <person name="Rutter S."/>
            <person name="Saunders D."/>
            <person name="Seeger K."/>
            <person name="Sharp S."/>
            <person name="Skelton J."/>
            <person name="Simmonds M.N."/>
            <person name="Squares R."/>
            <person name="Squares S."/>
            <person name="Stevens K."/>
            <person name="Taylor K."/>
            <person name="Taylor R.G."/>
            <person name="Tivey A."/>
            <person name="Walsh S.V."/>
            <person name="Warren T."/>
            <person name="Whitehead S."/>
            <person name="Woodward J.R."/>
            <person name="Volckaert G."/>
            <person name="Aert R."/>
            <person name="Robben J."/>
            <person name="Grymonprez B."/>
            <person name="Weltjens I."/>
            <person name="Vanstreels E."/>
            <person name="Rieger M."/>
            <person name="Schaefer M."/>
            <person name="Mueller-Auer S."/>
            <person name="Gabel C."/>
            <person name="Fuchs M."/>
            <person name="Duesterhoeft A."/>
            <person name="Fritzc C."/>
            <person name="Holzer E."/>
            <person name="Moestl D."/>
            <person name="Hilbert H."/>
            <person name="Borzym K."/>
            <person name="Langer I."/>
            <person name="Beck A."/>
            <person name="Lehrach H."/>
            <person name="Reinhardt R."/>
            <person name="Pohl T.M."/>
            <person name="Eger P."/>
            <person name="Zimmermann W."/>
            <person name="Wedler H."/>
            <person name="Wambutt R."/>
            <person name="Purnelle B."/>
            <person name="Goffeau A."/>
            <person name="Cadieu E."/>
            <person name="Dreano S."/>
            <person name="Gloux S."/>
            <person name="Lelaure V."/>
            <person name="Mottier S."/>
            <person name="Galibert F."/>
            <person name="Aves S.J."/>
            <person name="Xiang Z."/>
            <person name="Hunt C."/>
            <person name="Moore K."/>
            <person name="Hurst S.M."/>
            <person name="Lucas M."/>
            <person name="Rochet M."/>
            <person name="Gaillardin C."/>
            <person name="Tallada V.A."/>
            <person name="Garzon A."/>
            <person name="Thode G."/>
            <person name="Daga R.R."/>
            <person name="Cruzado L."/>
            <person name="Jimenez J."/>
            <person name="Sanchez M."/>
            <person name="del Rey F."/>
            <person name="Benito J."/>
            <person name="Dominguez A."/>
            <person name="Revuelta J.L."/>
            <person name="Moreno S."/>
            <person name="Armstrong J."/>
            <person name="Forsburg S.L."/>
            <person name="Cerutti L."/>
            <person name="Lowe T."/>
            <person name="McCombie W.R."/>
            <person name="Paulsen I."/>
            <person name="Potashkin J."/>
            <person name="Shpakovski G.V."/>
            <person name="Ussery D."/>
            <person name="Barrell B.G."/>
            <person name="Nurse P."/>
        </authorList>
    </citation>
    <scope>NUCLEOTIDE SEQUENCE [LARGE SCALE GENOMIC DNA]</scope>
    <source>
        <strain>972 / ATCC 24843</strain>
    </source>
</reference>
<reference key="2">
    <citation type="journal article" date="2000" name="Genes Cells">
        <title>Large-scale screening of intracellular protein localization in living fission yeast cells by the use of a GFP-fusion genomic DNA library.</title>
        <authorList>
            <person name="Ding D.-Q."/>
            <person name="Tomita Y."/>
            <person name="Yamamoto A."/>
            <person name="Chikashige Y."/>
            <person name="Haraguchi T."/>
            <person name="Hiraoka Y."/>
        </authorList>
    </citation>
    <scope>NUCLEOTIDE SEQUENCE [LARGE SCALE GENOMIC DNA] OF 184-385</scope>
    <scope>SUBCELLULAR LOCATION</scope>
    <source>
        <strain>ATCC 38364 / 968</strain>
    </source>
</reference>
<reference key="3">
    <citation type="journal article" date="2008" name="J. Proteome Res.">
        <title>Phosphoproteome analysis of fission yeast.</title>
        <authorList>
            <person name="Wilson-Grady J.T."/>
            <person name="Villen J."/>
            <person name="Gygi S.P."/>
        </authorList>
    </citation>
    <scope>PHOSPHORYLATION [LARGE SCALE ANALYSIS] AT SER-598</scope>
    <scope>IDENTIFICATION BY MASS SPECTROMETRY</scope>
</reference>
<gene>
    <name type="ORF">SPBC1683.13c</name>
</gene>
<protein>
    <recommendedName>
        <fullName>Uncharacterized transcriptional regulatory protein C1683.13c</fullName>
    </recommendedName>
</protein>
<evidence type="ECO:0000255" key="1">
    <source>
        <dbReference type="PROSITE-ProRule" id="PRU00227"/>
    </source>
</evidence>
<evidence type="ECO:0000269" key="2">
    <source>
    </source>
</evidence>
<evidence type="ECO:0000269" key="3">
    <source>
    </source>
</evidence>
<evidence type="ECO:0000305" key="4"/>
<feature type="chain" id="PRO_0000115011" description="Uncharacterized transcriptional regulatory protein C1683.13c">
    <location>
        <begin position="1"/>
        <end position="618"/>
    </location>
</feature>
<feature type="DNA-binding region" description="Zn(2)-C6 fungal-type" evidence="1">
    <location>
        <begin position="18"/>
        <end position="47"/>
    </location>
</feature>
<feature type="modified residue" description="Phosphoserine" evidence="3">
    <location>
        <position position="598"/>
    </location>
</feature>
<feature type="sequence conflict" description="In Ref. 2; BAA87231." evidence="4" ref="2">
    <original>L</original>
    <variation>V</variation>
    <location>
        <position position="184"/>
    </location>
</feature>
<feature type="sequence conflict" description="In Ref. 2; BAA87231." evidence="4" ref="2">
    <original>F</original>
    <variation>V</variation>
    <location>
        <position position="198"/>
    </location>
</feature>